<name>ARSC_SHOC1</name>
<keyword id="KW-0059">Arsenical resistance</keyword>
<keyword id="KW-0963">Cytoplasm</keyword>
<keyword id="KW-1015">Disulfide bond</keyword>
<keyword id="KW-0560">Oxidoreductase</keyword>
<keyword id="KW-0676">Redox-active center</keyword>
<keyword id="KW-1185">Reference proteome</keyword>
<organism>
    <name type="scientific">Shouchella clausii (strain KSM-K16)</name>
    <name type="common">Alkalihalobacillus clausii</name>
    <dbReference type="NCBI Taxonomy" id="66692"/>
    <lineage>
        <taxon>Bacteria</taxon>
        <taxon>Bacillati</taxon>
        <taxon>Bacillota</taxon>
        <taxon>Bacilli</taxon>
        <taxon>Bacillales</taxon>
        <taxon>Bacillaceae</taxon>
        <taxon>Shouchella</taxon>
    </lineage>
</organism>
<evidence type="ECO:0000255" key="1">
    <source>
        <dbReference type="HAMAP-Rule" id="MF_01624"/>
    </source>
</evidence>
<gene>
    <name evidence="1" type="primary">arsC</name>
    <name type="ordered locus">ABC0837</name>
</gene>
<sequence>MSKKIIYFLCTGNSCRSQMAEGFGKHYLSDEWEVYSAGMEAHGLNPNAVKAMNEVGIDISDQTSDLIHIDLLNNADFVVTLCGDAADKCPLTPAHVKREHWGFDDPAKAEGTKEERWMVFQRVRDEIGARIKKFAETGE</sequence>
<comment type="function">
    <text evidence="1">Catalyzes the reduction of arsenate [As(V)] to arsenite [As(III)].</text>
</comment>
<comment type="catalytic activity">
    <reaction evidence="1">
        <text>arsenate + [thioredoxin]-dithiol + H(+) = arsenite + [thioredoxin]-disulfide + H2O</text>
        <dbReference type="Rhea" id="RHEA:43848"/>
        <dbReference type="Rhea" id="RHEA-COMP:10698"/>
        <dbReference type="Rhea" id="RHEA-COMP:10700"/>
        <dbReference type="ChEBI" id="CHEBI:15377"/>
        <dbReference type="ChEBI" id="CHEBI:15378"/>
        <dbReference type="ChEBI" id="CHEBI:29242"/>
        <dbReference type="ChEBI" id="CHEBI:29950"/>
        <dbReference type="ChEBI" id="CHEBI:48597"/>
        <dbReference type="ChEBI" id="CHEBI:50058"/>
        <dbReference type="EC" id="1.20.4.4"/>
    </reaction>
</comment>
<comment type="subcellular location">
    <subcellularLocation>
        <location evidence="1">Cytoplasm</location>
    </subcellularLocation>
</comment>
<comment type="similarity">
    <text evidence="1">Belongs to the low molecular weight phosphotyrosine protein phosphatase family. Thioredoxin-coupled ArsC subfamily.</text>
</comment>
<accession>Q5WJS9</accession>
<protein>
    <recommendedName>
        <fullName evidence="1">Arsenate reductase</fullName>
        <ecNumber evidence="1">1.20.4.4</ecNumber>
    </recommendedName>
</protein>
<dbReference type="EC" id="1.20.4.4" evidence="1"/>
<dbReference type="EMBL" id="AP006627">
    <property type="protein sequence ID" value="BAD63376.1"/>
    <property type="molecule type" value="Genomic_DNA"/>
</dbReference>
<dbReference type="RefSeq" id="WP_011245692.1">
    <property type="nucleotide sequence ID" value="NC_006582.1"/>
</dbReference>
<dbReference type="SMR" id="Q5WJS9"/>
<dbReference type="STRING" id="66692.ABC0837"/>
<dbReference type="KEGG" id="bcl:ABC0837"/>
<dbReference type="eggNOG" id="COG0394">
    <property type="taxonomic scope" value="Bacteria"/>
</dbReference>
<dbReference type="HOGENOM" id="CLU_071415_3_2_9"/>
<dbReference type="OrthoDB" id="9784339at2"/>
<dbReference type="Proteomes" id="UP000001168">
    <property type="component" value="Chromosome"/>
</dbReference>
<dbReference type="GO" id="GO:0005737">
    <property type="term" value="C:cytoplasm"/>
    <property type="evidence" value="ECO:0007669"/>
    <property type="project" value="UniProtKB-SubCell"/>
</dbReference>
<dbReference type="GO" id="GO:0030612">
    <property type="term" value="F:arsenate reductase (thioredoxin) activity"/>
    <property type="evidence" value="ECO:0007669"/>
    <property type="project" value="UniProtKB-UniRule"/>
</dbReference>
<dbReference type="GO" id="GO:0004725">
    <property type="term" value="F:protein tyrosine phosphatase activity"/>
    <property type="evidence" value="ECO:0007669"/>
    <property type="project" value="InterPro"/>
</dbReference>
<dbReference type="GO" id="GO:0046685">
    <property type="term" value="P:response to arsenic-containing substance"/>
    <property type="evidence" value="ECO:0007669"/>
    <property type="project" value="UniProtKB-KW"/>
</dbReference>
<dbReference type="CDD" id="cd16345">
    <property type="entry name" value="LMWP_ArsC"/>
    <property type="match status" value="1"/>
</dbReference>
<dbReference type="FunFam" id="3.40.50.2300:FF:000237">
    <property type="entry name" value="Arsenate reductase"/>
    <property type="match status" value="1"/>
</dbReference>
<dbReference type="Gene3D" id="3.40.50.2300">
    <property type="match status" value="1"/>
</dbReference>
<dbReference type="HAMAP" id="MF_01624">
    <property type="entry name" value="Arsenate_reduct"/>
    <property type="match status" value="1"/>
</dbReference>
<dbReference type="InterPro" id="IPR014064">
    <property type="entry name" value="Arsenate_reductase_ArsC"/>
</dbReference>
<dbReference type="InterPro" id="IPR023485">
    <property type="entry name" value="Ptyr_pPase"/>
</dbReference>
<dbReference type="InterPro" id="IPR036196">
    <property type="entry name" value="Ptyr_pPase_sf"/>
</dbReference>
<dbReference type="NCBIfam" id="TIGR02691">
    <property type="entry name" value="arsC_pI258_fam"/>
    <property type="match status" value="1"/>
</dbReference>
<dbReference type="NCBIfam" id="NF010053">
    <property type="entry name" value="PRK13530.1"/>
    <property type="match status" value="1"/>
</dbReference>
<dbReference type="PANTHER" id="PTHR43428">
    <property type="entry name" value="ARSENATE REDUCTASE"/>
    <property type="match status" value="1"/>
</dbReference>
<dbReference type="PANTHER" id="PTHR43428:SF1">
    <property type="entry name" value="ARSENATE REDUCTASE"/>
    <property type="match status" value="1"/>
</dbReference>
<dbReference type="Pfam" id="PF01451">
    <property type="entry name" value="LMWPc"/>
    <property type="match status" value="1"/>
</dbReference>
<dbReference type="SMART" id="SM00226">
    <property type="entry name" value="LMWPc"/>
    <property type="match status" value="1"/>
</dbReference>
<dbReference type="SUPFAM" id="SSF52788">
    <property type="entry name" value="Phosphotyrosine protein phosphatases I"/>
    <property type="match status" value="1"/>
</dbReference>
<reference key="1">
    <citation type="submission" date="2003-10" db="EMBL/GenBank/DDBJ databases">
        <title>The complete genome sequence of the alkaliphilic Bacillus clausii KSM-K16.</title>
        <authorList>
            <person name="Takaki Y."/>
            <person name="Kageyama Y."/>
            <person name="Shimamura S."/>
            <person name="Suzuki H."/>
            <person name="Nishi S."/>
            <person name="Hatada Y."/>
            <person name="Kawai S."/>
            <person name="Ito S."/>
            <person name="Horikoshi K."/>
        </authorList>
    </citation>
    <scope>NUCLEOTIDE SEQUENCE [LARGE SCALE GENOMIC DNA]</scope>
    <source>
        <strain>KSM-K16</strain>
    </source>
</reference>
<proteinExistence type="inferred from homology"/>
<feature type="chain" id="PRO_0000162516" description="Arsenate reductase">
    <location>
        <begin position="1"/>
        <end position="139"/>
    </location>
</feature>
<feature type="active site" description="Nucleophile" evidence="1">
    <location>
        <position position="10"/>
    </location>
</feature>
<feature type="active site" description="Nucleophile" evidence="1">
    <location>
        <position position="82"/>
    </location>
</feature>
<feature type="active site" description="Nucleophile" evidence="1">
    <location>
        <position position="89"/>
    </location>
</feature>
<feature type="disulfide bond" description="Redox-active; alternate" evidence="1">
    <location>
        <begin position="10"/>
        <end position="82"/>
    </location>
</feature>
<feature type="disulfide bond" description="Redox-active; alternate" evidence="1">
    <location>
        <begin position="82"/>
        <end position="89"/>
    </location>
</feature>